<organismHost>
    <name type="scientific">Homo sapiens</name>
    <name type="common">Human</name>
    <dbReference type="NCBI Taxonomy" id="9606"/>
</organismHost>
<accession>Q9QNA6</accession>
<sequence>MDKLADLNYTLSVITLMNDTLHSIIQDPGMAYFTYIASVLTVLFTLHKASIPTMKIALKTSKCSYKVIKYCIVTIINTLLRLAGYKEQVTTKDEIEQQMDRIVKEMRRQLEMIDKLTTREIEQVELLKSIHDNLITRSVDVIDMSKEFNQKNIKTLDEWESGRNPYEPSEVTASM</sequence>
<reference key="1">
    <citation type="submission" date="1999-01" db="EMBL/GenBank/DDBJ databases">
        <authorList>
            <person name="Taniguchi K."/>
        </authorList>
    </citation>
    <scope>NUCLEOTIDE SEQUENCE [MRNA]</scope>
</reference>
<protein>
    <recommendedName>
        <fullName evidence="1">Non-structural glycoprotein 4</fullName>
        <shortName evidence="1">NSP4</shortName>
    </recommendedName>
    <alternativeName>
        <fullName evidence="1">NCVP5</fullName>
    </alternativeName>
    <alternativeName>
        <fullName evidence="1">NS28</fullName>
    </alternativeName>
</protein>
<organism>
    <name type="scientific">Rotavirus A (strain RVA/Human/Japan/KU/1995/G1P1A[8])</name>
    <name type="common">RV-A</name>
    <dbReference type="NCBI Taxonomy" id="10952"/>
    <lineage>
        <taxon>Viruses</taxon>
        <taxon>Riboviria</taxon>
        <taxon>Orthornavirae</taxon>
        <taxon>Duplornaviricota</taxon>
        <taxon>Resentoviricetes</taxon>
        <taxon>Reovirales</taxon>
        <taxon>Sedoreoviridae</taxon>
        <taxon>Rotavirus</taxon>
        <taxon>Rotavirus A</taxon>
    </lineage>
</organism>
<dbReference type="EMBL" id="AB022772">
    <property type="protein sequence ID" value="BAA84969.1"/>
    <property type="molecule type" value="mRNA"/>
</dbReference>
<dbReference type="SMR" id="Q9QNA6"/>
<dbReference type="Proteomes" id="UP000001458">
    <property type="component" value="Genome"/>
</dbReference>
<dbReference type="GO" id="GO:0005576">
    <property type="term" value="C:extracellular region"/>
    <property type="evidence" value="ECO:0007669"/>
    <property type="project" value="UniProtKB-SubCell"/>
</dbReference>
<dbReference type="GO" id="GO:0044155">
    <property type="term" value="C:host caveola"/>
    <property type="evidence" value="ECO:0007669"/>
    <property type="project" value="UniProtKB-SubCell"/>
</dbReference>
<dbReference type="GO" id="GO:0044169">
    <property type="term" value="C:host cell rough endoplasmic reticulum membrane"/>
    <property type="evidence" value="ECO:0007669"/>
    <property type="project" value="UniProtKB-SubCell"/>
</dbReference>
<dbReference type="GO" id="GO:0016020">
    <property type="term" value="C:membrane"/>
    <property type="evidence" value="ECO:0007669"/>
    <property type="project" value="UniProtKB-UniRule"/>
</dbReference>
<dbReference type="GO" id="GO:0015267">
    <property type="term" value="F:channel activity"/>
    <property type="evidence" value="ECO:0007669"/>
    <property type="project" value="UniProtKB-KW"/>
</dbReference>
<dbReference type="GO" id="GO:0046872">
    <property type="term" value="F:metal ion binding"/>
    <property type="evidence" value="ECO:0007669"/>
    <property type="project" value="UniProtKB-UniRule"/>
</dbReference>
<dbReference type="GO" id="GO:0090729">
    <property type="term" value="F:toxin activity"/>
    <property type="evidence" value="ECO:0007669"/>
    <property type="project" value="UniProtKB-UniRule"/>
</dbReference>
<dbReference type="GO" id="GO:0034220">
    <property type="term" value="P:monoatomic ion transmembrane transport"/>
    <property type="evidence" value="ECO:0007669"/>
    <property type="project" value="UniProtKB-KW"/>
</dbReference>
<dbReference type="GO" id="GO:0039520">
    <property type="term" value="P:symbiont-mediated activation of host autophagy"/>
    <property type="evidence" value="ECO:0007669"/>
    <property type="project" value="UniProtKB-KW"/>
</dbReference>
<dbReference type="GO" id="GO:0016032">
    <property type="term" value="P:viral process"/>
    <property type="evidence" value="ECO:0007669"/>
    <property type="project" value="UniProtKB-UniRule"/>
</dbReference>
<dbReference type="Gene3D" id="1.20.5.430">
    <property type="match status" value="1"/>
</dbReference>
<dbReference type="HAMAP" id="MF_04091">
    <property type="entry name" value="ROTA_NSP4"/>
    <property type="match status" value="1"/>
</dbReference>
<dbReference type="InterPro" id="IPR002107">
    <property type="entry name" value="Rotavirus_NSP4"/>
</dbReference>
<dbReference type="Pfam" id="PF01452">
    <property type="entry name" value="Rota_NSP4"/>
    <property type="match status" value="1"/>
</dbReference>
<dbReference type="SUPFAM" id="SSF58030">
    <property type="entry name" value="Rotavirus nonstructural proteins"/>
    <property type="match status" value="1"/>
</dbReference>
<keyword id="KW-1072">Activation of host autophagy by virus</keyword>
<keyword id="KW-0106">Calcium</keyword>
<keyword id="KW-0260">Enterotoxin</keyword>
<keyword id="KW-0325">Glycoprotein</keyword>
<keyword id="KW-1038">Host endoplasmic reticulum</keyword>
<keyword id="KW-1043">Host membrane</keyword>
<keyword id="KW-0945">Host-virus interaction</keyword>
<keyword id="KW-0407">Ion channel</keyword>
<keyword id="KW-0406">Ion transport</keyword>
<keyword id="KW-0472">Membrane</keyword>
<keyword id="KW-0479">Metal-binding</keyword>
<keyword id="KW-0964">Secreted</keyword>
<keyword id="KW-0735">Signal-anchor</keyword>
<keyword id="KW-0800">Toxin</keyword>
<keyword id="KW-0812">Transmembrane</keyword>
<keyword id="KW-1133">Transmembrane helix</keyword>
<keyword id="KW-0813">Transport</keyword>
<keyword id="KW-1182">Viral ion channel</keyword>
<keyword id="KW-0843">Virulence</keyword>
<name>NSP4_ROTHK</name>
<feature type="chain" id="PRO_0000369480" description="Non-structural glycoprotein 4">
    <location>
        <begin position="1"/>
        <end position="175"/>
    </location>
</feature>
<feature type="topological domain" description="Lumenal" evidence="1">
    <location>
        <begin position="1"/>
        <end position="28"/>
    </location>
</feature>
<feature type="transmembrane region" description="Helical; Signal-anchor for type III membrane protein" evidence="1">
    <location>
        <begin position="29"/>
        <end position="51"/>
    </location>
</feature>
<feature type="topological domain" description="Cytoplasmic" evidence="1">
    <location>
        <begin position="52"/>
        <end position="175"/>
    </location>
</feature>
<feature type="binding site" evidence="1">
    <location>
        <position position="120"/>
    </location>
    <ligand>
        <name>Ca(2+)</name>
        <dbReference type="ChEBI" id="CHEBI:29108"/>
    </ligand>
</feature>
<feature type="binding site" evidence="1">
    <location>
        <position position="123"/>
    </location>
    <ligand>
        <name>Ca(2+)</name>
        <dbReference type="ChEBI" id="CHEBI:29108"/>
    </ligand>
</feature>
<feature type="glycosylation site" description="N-linked (GlcNAc...) asparagine; by host" evidence="1">
    <location>
        <position position="8"/>
    </location>
</feature>
<feature type="glycosylation site" description="N-linked (GlcNAc...) asparagine; by host" evidence="1">
    <location>
        <position position="18"/>
    </location>
</feature>
<evidence type="ECO:0000255" key="1">
    <source>
        <dbReference type="HAMAP-Rule" id="MF_04091"/>
    </source>
</evidence>
<proteinExistence type="evidence at transcript level"/>
<comment type="function">
    <text evidence="1">Plays an essential role in the virus replication cycle by acting as a viroporin. Creates a pore in the host endoplasmic reticulum and as a consequence releases Ca(2+) in the cytoplasm of infected cell. In turn, high levels of cytoplasmic calcium trigger membrane trafficking and transport of viral ER-associated proteins to viroplasms, sites of viral genome replication and immature particle assembly.</text>
</comment>
<comment type="function">
    <text evidence="1">The secreted form acts as an enterotoxin that causes phospholipase C-dependent elevation of the intracellular calcium concentration in host intestinal mucosa cells. Increased concentration of intracellular calcium disrupts the cytoskeleton and the tight junctions, raising the paracellular permeability. Potentiates chloride ion secretion through a calcium ion-dependent signaling pathway, inducing age-dependent diarrhea. To perform this enterotoxigenic role in vivo, NSP4 is released from infected enterocytes in a soluble form capable of diffusing within the intestinal lumen and interacting with host plasma membrane receptors on neighboring epithelial cells such as integrins ITGA1/ITGB1 and ITGA2/ITGB1.</text>
</comment>
<comment type="subunit">
    <text evidence="1">Homotetramer. Interacts with the immature particle in the viroplasm. Interacts with host CAV1, early and late in infection. Interacts with host integrin ITGA1/ITGB1 heterodimer. Interacts with host integrin ITGA2/ITGB1 heterodimer. Interaction with microtubules blocks trafficking to the Golgi apparatus.</text>
</comment>
<comment type="subcellular location">
    <subcellularLocation>
        <location evidence="1">Host rough endoplasmic reticulum membrane</location>
        <topology evidence="1">Single-pass type III membrane protein</topology>
    </subcellularLocation>
    <subcellularLocation>
        <location evidence="1">Host membrane</location>
        <location evidence="1">Host caveola</location>
        <topology evidence="1">Single-pass type III membrane protein</topology>
    </subcellularLocation>
    <subcellularLocation>
        <location evidence="1">Secreted</location>
    </subcellularLocation>
    <text evidence="1">NSP4 also localizes in vesicular structures which contain autophagosomal markers and associate with viroplasms in virus-infected cells. Additionally, a soluble form of glycosylated NSP4 is secreted despite retention of its transmembrane domain.</text>
</comment>
<comment type="domain">
    <text evidence="1">Binds 1 calcium ion per tetramer.</text>
</comment>
<comment type="PTM">
    <text evidence="1">The N-glycosyl content is primarily Man(9)GlcNAc, with a small amount of Man(8)GlcNAc.</text>
</comment>
<comment type="similarity">
    <text evidence="1">Belongs to the rotavirus NSP4 family.</text>
</comment>